<comment type="function">
    <text>Involved in the transposition of the insertion sequence IS2.</text>
</comment>
<comment type="similarity">
    <text evidence="1">Belongs to the transposase 8 family.</text>
</comment>
<comment type="sequence caution" evidence="1">
    <conflict type="erroneous initiation">
        <sequence resource="EMBL-CDS" id="AAB18084"/>
    </conflict>
    <text>Extended N-terminus.</text>
</comment>
<comment type="sequence caution" evidence="1">
    <conflict type="erroneous initiation">
        <sequence resource="EMBL-CDS" id="BAE76141"/>
    </conflict>
    <text>Extended N-terminus.</text>
</comment>
<accession>P0CF40</accession>
<accession>O07989</accession>
<accession>O08018</accession>
<accession>O08019</accession>
<accession>P0C5W2</accession>
<accession>P19776</accession>
<accession>P76357</accession>
<accession>P77346</accession>
<accession>Q2MBI5</accession>
<accession>Q2MC65</accession>
<accession>Q79BJ2</accession>
<accession>Q9JMT0</accession>
<keyword id="KW-0233">DNA recombination</keyword>
<keyword id="KW-0238">DNA-binding</keyword>
<keyword id="KW-1185">Reference proteome</keyword>
<keyword id="KW-0814">Transposable element</keyword>
<keyword id="KW-0815">Transposition</keyword>
<feature type="chain" id="PRO_0000075409" description="Transposase InsC for insertion element IS2A">
    <location>
        <begin position="1"/>
        <end position="121"/>
    </location>
</feature>
<gene>
    <name type="primary">insC1</name>
    <name type="ordered locus">b0360</name>
    <name type="ordered locus">JW0351</name>
</gene>
<organism>
    <name type="scientific">Escherichia coli (strain K12)</name>
    <dbReference type="NCBI Taxonomy" id="83333"/>
    <lineage>
        <taxon>Bacteria</taxon>
        <taxon>Pseudomonadati</taxon>
        <taxon>Pseudomonadota</taxon>
        <taxon>Gammaproteobacteria</taxon>
        <taxon>Enterobacterales</taxon>
        <taxon>Enterobacteriaceae</taxon>
        <taxon>Escherichia</taxon>
    </lineage>
</organism>
<sequence length="121" mass="13452">MIDVLGPEKRRRRTTQEKIAIVQQSFEPGMTVSLVARQHGVAASQLFLWRKQYQEGSLTAVAAGEQVVPASELAAAMKQIKELQRLLGKKTMENELLKEAVEYGRAKKWIAHAPLLPGDGE</sequence>
<protein>
    <recommendedName>
        <fullName>Transposase InsC for insertion element IS2A</fullName>
    </recommendedName>
</protein>
<evidence type="ECO:0000305" key="1"/>
<name>INSC1_ECOLI</name>
<dbReference type="EMBL" id="U73857">
    <property type="protein sequence ID" value="AAB18084.1"/>
    <property type="status" value="ALT_INIT"/>
    <property type="molecule type" value="Genomic_DNA"/>
</dbReference>
<dbReference type="EMBL" id="U00096">
    <property type="protein sequence ID" value="AAC73463.2"/>
    <property type="molecule type" value="Genomic_DNA"/>
</dbReference>
<dbReference type="EMBL" id="AP009048">
    <property type="protein sequence ID" value="BAE76141.1"/>
    <property type="status" value="ALT_INIT"/>
    <property type="molecule type" value="Genomic_DNA"/>
</dbReference>
<dbReference type="PIR" id="B65240">
    <property type="entry name" value="B65240"/>
</dbReference>
<dbReference type="RefSeq" id="NP_414894.2">
    <property type="nucleotide sequence ID" value="NC_000913.3"/>
</dbReference>
<dbReference type="SMR" id="P0CF40"/>
<dbReference type="FunCoup" id="P0CF40">
    <property type="interactions" value="117"/>
</dbReference>
<dbReference type="jPOST" id="P0CF40"/>
<dbReference type="EnsemblBacteria" id="AAC73463">
    <property type="protein sequence ID" value="AAC73463"/>
    <property type="gene ID" value="b0360"/>
</dbReference>
<dbReference type="GeneID" id="945025"/>
<dbReference type="KEGG" id="ecj:JW0351"/>
<dbReference type="KEGG" id="eco:b0360"/>
<dbReference type="KEGG" id="eco:b1403"/>
<dbReference type="KEGG" id="eco:b1997"/>
<dbReference type="KEGG" id="eco:b2861"/>
<dbReference type="KEGG" id="eco:b3044"/>
<dbReference type="KEGG" id="eco:b4272"/>
<dbReference type="KEGG" id="ecoc:C3026_00670"/>
<dbReference type="KEGG" id="ecoc:C3026_03840"/>
<dbReference type="KEGG" id="ecoc:C3026_06235"/>
<dbReference type="KEGG" id="ecoc:C3026_08180"/>
<dbReference type="KEGG" id="ecoc:C3026_09100"/>
<dbReference type="KEGG" id="ecoc:C3026_11265"/>
<dbReference type="KEGG" id="ecoc:C3026_15305"/>
<dbReference type="KEGG" id="ecoc:C3026_15700"/>
<dbReference type="KEGG" id="ecoc:C3026_16625"/>
<dbReference type="KEGG" id="ecoc:C3026_20340"/>
<dbReference type="KEGG" id="ecoc:C3026_23040"/>
<dbReference type="KEGG" id="ecoc:C3026_24220"/>
<dbReference type="EchoBASE" id="EB4751"/>
<dbReference type="eggNOG" id="COG2963">
    <property type="taxonomic scope" value="Bacteria"/>
</dbReference>
<dbReference type="HOGENOM" id="CLU_027402_25_0_6"/>
<dbReference type="InParanoid" id="P0CF40"/>
<dbReference type="PhylomeDB" id="P0CF40"/>
<dbReference type="BioCyc" id="EcoCyc:G6212-MONOMER"/>
<dbReference type="PRO" id="PR:P0CF40"/>
<dbReference type="Proteomes" id="UP000000625">
    <property type="component" value="Chromosome"/>
</dbReference>
<dbReference type="GO" id="GO:0003677">
    <property type="term" value="F:DNA binding"/>
    <property type="evidence" value="ECO:0007669"/>
    <property type="project" value="UniProtKB-KW"/>
</dbReference>
<dbReference type="GO" id="GO:0004803">
    <property type="term" value="F:transposase activity"/>
    <property type="evidence" value="ECO:0007669"/>
    <property type="project" value="InterPro"/>
</dbReference>
<dbReference type="GO" id="GO:0006313">
    <property type="term" value="P:DNA transposition"/>
    <property type="evidence" value="ECO:0007669"/>
    <property type="project" value="InterPro"/>
</dbReference>
<dbReference type="Gene3D" id="1.10.10.10">
    <property type="entry name" value="Winged helix-like DNA-binding domain superfamily/Winged helix DNA-binding domain"/>
    <property type="match status" value="1"/>
</dbReference>
<dbReference type="InterPro" id="IPR009057">
    <property type="entry name" value="Homeodomain-like_sf"/>
</dbReference>
<dbReference type="InterPro" id="IPR002514">
    <property type="entry name" value="Transposase_8"/>
</dbReference>
<dbReference type="InterPro" id="IPR036388">
    <property type="entry name" value="WH-like_DNA-bd_sf"/>
</dbReference>
<dbReference type="NCBIfam" id="NF006928">
    <property type="entry name" value="PRK09413.1"/>
    <property type="match status" value="1"/>
</dbReference>
<dbReference type="PANTHER" id="PTHR37936">
    <property type="entry name" value="TRANSPOSASE INSC FOR INSERTION ELEMENT IS2A-RELATED"/>
    <property type="match status" value="1"/>
</dbReference>
<dbReference type="PANTHER" id="PTHR37936:SF3">
    <property type="entry name" value="TRANSPOSASE INSC FOR INSERTION ELEMENT IS2A-RELATED"/>
    <property type="match status" value="1"/>
</dbReference>
<dbReference type="Pfam" id="PF01527">
    <property type="entry name" value="HTH_Tnp_1"/>
    <property type="match status" value="1"/>
</dbReference>
<dbReference type="SUPFAM" id="SSF46689">
    <property type="entry name" value="Homeodomain-like"/>
    <property type="match status" value="1"/>
</dbReference>
<reference key="1">
    <citation type="submission" date="1997-01" db="EMBL/GenBank/DDBJ databases">
        <title>Sequence of minutes 4-25 of Escherichia coli.</title>
        <authorList>
            <person name="Chung E."/>
            <person name="Allen E."/>
            <person name="Araujo R."/>
            <person name="Aparicio A.M."/>
            <person name="Davis K."/>
            <person name="Duncan M."/>
            <person name="Federspiel N."/>
            <person name="Hyman R."/>
            <person name="Kalman S."/>
            <person name="Komp C."/>
            <person name="Kurdi O."/>
            <person name="Lew H."/>
            <person name="Lin D."/>
            <person name="Namath A."/>
            <person name="Oefner P."/>
            <person name="Roberts D."/>
            <person name="Schramm S."/>
            <person name="Davis R.W."/>
        </authorList>
    </citation>
    <scope>NUCLEOTIDE SEQUENCE [LARGE SCALE GENOMIC DNA]</scope>
    <source>
        <strain>K12 / MG1655 / ATCC 47076</strain>
    </source>
</reference>
<reference key="2">
    <citation type="journal article" date="1997" name="Science">
        <title>The complete genome sequence of Escherichia coli K-12.</title>
        <authorList>
            <person name="Blattner F.R."/>
            <person name="Plunkett G. III"/>
            <person name="Bloch C.A."/>
            <person name="Perna N.T."/>
            <person name="Burland V."/>
            <person name="Riley M."/>
            <person name="Collado-Vides J."/>
            <person name="Glasner J.D."/>
            <person name="Rode C.K."/>
            <person name="Mayhew G.F."/>
            <person name="Gregor J."/>
            <person name="Davis N.W."/>
            <person name="Kirkpatrick H.A."/>
            <person name="Goeden M.A."/>
            <person name="Rose D.J."/>
            <person name="Mau B."/>
            <person name="Shao Y."/>
        </authorList>
    </citation>
    <scope>NUCLEOTIDE SEQUENCE [LARGE SCALE GENOMIC DNA]</scope>
    <source>
        <strain>K12 / MG1655 / ATCC 47076</strain>
    </source>
</reference>
<reference key="3">
    <citation type="journal article" date="2006" name="Mol. Syst. Biol.">
        <title>Highly accurate genome sequences of Escherichia coli K-12 strains MG1655 and W3110.</title>
        <authorList>
            <person name="Hayashi K."/>
            <person name="Morooka N."/>
            <person name="Yamamoto Y."/>
            <person name="Fujita K."/>
            <person name="Isono K."/>
            <person name="Choi S."/>
            <person name="Ohtsubo E."/>
            <person name="Baba T."/>
            <person name="Wanner B.L."/>
            <person name="Mori H."/>
            <person name="Horiuchi T."/>
        </authorList>
    </citation>
    <scope>NUCLEOTIDE SEQUENCE [LARGE SCALE GENOMIC DNA]</scope>
    <source>
        <strain>K12 / W3110 / ATCC 27325 / DSM 5911</strain>
    </source>
</reference>
<proteinExistence type="inferred from homology"/>